<keyword id="KW-0997">Cell inner membrane</keyword>
<keyword id="KW-1003">Cell membrane</keyword>
<keyword id="KW-0444">Lipid biosynthesis</keyword>
<keyword id="KW-0443">Lipid metabolism</keyword>
<keyword id="KW-0472">Membrane</keyword>
<keyword id="KW-0594">Phospholipid biosynthesis</keyword>
<keyword id="KW-1208">Phospholipid metabolism</keyword>
<keyword id="KW-1185">Reference proteome</keyword>
<keyword id="KW-0808">Transferase</keyword>
<keyword id="KW-0812">Transmembrane</keyword>
<keyword id="KW-1133">Transmembrane helix</keyword>
<sequence length="201" mass="22372">MSLFAIFYLFLAYLLGSVSSAILLCRLAGLPDPRESGSHNPGATNVLRIGGRWVALSVLLFDMLKGMLPVWLGYYLGLTHFELGMVALGACLGHIFPIFFKFKGGKGVATAFGAIAPISWGVAGSMLGTWLLIFFVSGYSSLSAVMTALLVPFYVWWFKPEFTFPVALVCCLLIYRHHDNIQRLWRGQEDKVWNKLKNKKD</sequence>
<dbReference type="EC" id="2.3.1.275" evidence="1"/>
<dbReference type="EMBL" id="AE004439">
    <property type="protein sequence ID" value="AAK03780.1"/>
    <property type="molecule type" value="Genomic_DNA"/>
</dbReference>
<dbReference type="RefSeq" id="WP_005718674.1">
    <property type="nucleotide sequence ID" value="NC_002663.1"/>
</dbReference>
<dbReference type="SMR" id="Q9CKC7"/>
<dbReference type="STRING" id="272843.PM1696"/>
<dbReference type="EnsemblBacteria" id="AAK03780">
    <property type="protein sequence ID" value="AAK03780"/>
    <property type="gene ID" value="PM1696"/>
</dbReference>
<dbReference type="GeneID" id="77206617"/>
<dbReference type="KEGG" id="pmu:PM1696"/>
<dbReference type="HOGENOM" id="CLU_081254_0_2_6"/>
<dbReference type="OrthoDB" id="9777124at2"/>
<dbReference type="UniPathway" id="UPA00085"/>
<dbReference type="Proteomes" id="UP000000809">
    <property type="component" value="Chromosome"/>
</dbReference>
<dbReference type="GO" id="GO:0005886">
    <property type="term" value="C:plasma membrane"/>
    <property type="evidence" value="ECO:0007669"/>
    <property type="project" value="UniProtKB-SubCell"/>
</dbReference>
<dbReference type="GO" id="GO:0043772">
    <property type="term" value="F:acyl-phosphate glycerol-3-phosphate acyltransferase activity"/>
    <property type="evidence" value="ECO:0007669"/>
    <property type="project" value="UniProtKB-UniRule"/>
</dbReference>
<dbReference type="GO" id="GO:0008654">
    <property type="term" value="P:phospholipid biosynthetic process"/>
    <property type="evidence" value="ECO:0007669"/>
    <property type="project" value="UniProtKB-UniRule"/>
</dbReference>
<dbReference type="HAMAP" id="MF_01043">
    <property type="entry name" value="PlsY"/>
    <property type="match status" value="1"/>
</dbReference>
<dbReference type="InterPro" id="IPR003811">
    <property type="entry name" value="G3P_acylTferase_PlsY"/>
</dbReference>
<dbReference type="NCBIfam" id="TIGR00023">
    <property type="entry name" value="glycerol-3-phosphate 1-O-acyltransferase PlsY"/>
    <property type="match status" value="1"/>
</dbReference>
<dbReference type="PANTHER" id="PTHR30309:SF0">
    <property type="entry name" value="GLYCEROL-3-PHOSPHATE ACYLTRANSFERASE-RELATED"/>
    <property type="match status" value="1"/>
</dbReference>
<dbReference type="PANTHER" id="PTHR30309">
    <property type="entry name" value="INNER MEMBRANE PROTEIN YGIH"/>
    <property type="match status" value="1"/>
</dbReference>
<dbReference type="Pfam" id="PF02660">
    <property type="entry name" value="G3P_acyltransf"/>
    <property type="match status" value="1"/>
</dbReference>
<dbReference type="SMART" id="SM01207">
    <property type="entry name" value="G3P_acyltransf"/>
    <property type="match status" value="1"/>
</dbReference>
<gene>
    <name evidence="1" type="primary">plsY</name>
    <name type="ordered locus">PM1696</name>
</gene>
<accession>Q9CKC7</accession>
<evidence type="ECO:0000255" key="1">
    <source>
        <dbReference type="HAMAP-Rule" id="MF_01043"/>
    </source>
</evidence>
<protein>
    <recommendedName>
        <fullName evidence="1">Glycerol-3-phosphate acyltransferase</fullName>
    </recommendedName>
    <alternativeName>
        <fullName evidence="1">Acyl-PO4 G3P acyltransferase</fullName>
    </alternativeName>
    <alternativeName>
        <fullName evidence="1">Acyl-phosphate--glycerol-3-phosphate acyltransferase</fullName>
    </alternativeName>
    <alternativeName>
        <fullName evidence="1">G3P acyltransferase</fullName>
        <shortName evidence="1">GPAT</shortName>
        <ecNumber evidence="1">2.3.1.275</ecNumber>
    </alternativeName>
    <alternativeName>
        <fullName evidence="1">Lysophosphatidic acid synthase</fullName>
        <shortName evidence="1">LPA synthase</shortName>
    </alternativeName>
</protein>
<reference key="1">
    <citation type="journal article" date="2001" name="Proc. Natl. Acad. Sci. U.S.A.">
        <title>Complete genomic sequence of Pasteurella multocida Pm70.</title>
        <authorList>
            <person name="May B.J."/>
            <person name="Zhang Q."/>
            <person name="Li L.L."/>
            <person name="Paustian M.L."/>
            <person name="Whittam T.S."/>
            <person name="Kapur V."/>
        </authorList>
    </citation>
    <scope>NUCLEOTIDE SEQUENCE [LARGE SCALE GENOMIC DNA]</scope>
    <source>
        <strain>Pm70</strain>
    </source>
</reference>
<organism>
    <name type="scientific">Pasteurella multocida (strain Pm70)</name>
    <dbReference type="NCBI Taxonomy" id="272843"/>
    <lineage>
        <taxon>Bacteria</taxon>
        <taxon>Pseudomonadati</taxon>
        <taxon>Pseudomonadota</taxon>
        <taxon>Gammaproteobacteria</taxon>
        <taxon>Pasteurellales</taxon>
        <taxon>Pasteurellaceae</taxon>
        <taxon>Pasteurella</taxon>
    </lineage>
</organism>
<name>PLSY_PASMU</name>
<comment type="function">
    <text evidence="1">Catalyzes the transfer of an acyl group from acyl-phosphate (acyl-PO(4)) to glycerol-3-phosphate (G3P) to form lysophosphatidic acid (LPA). This enzyme utilizes acyl-phosphate as fatty acyl donor, but not acyl-CoA or acyl-ACP.</text>
</comment>
<comment type="catalytic activity">
    <reaction evidence="1">
        <text>an acyl phosphate + sn-glycerol 3-phosphate = a 1-acyl-sn-glycero-3-phosphate + phosphate</text>
        <dbReference type="Rhea" id="RHEA:34075"/>
        <dbReference type="ChEBI" id="CHEBI:43474"/>
        <dbReference type="ChEBI" id="CHEBI:57597"/>
        <dbReference type="ChEBI" id="CHEBI:57970"/>
        <dbReference type="ChEBI" id="CHEBI:59918"/>
        <dbReference type="EC" id="2.3.1.275"/>
    </reaction>
</comment>
<comment type="pathway">
    <text evidence="1">Lipid metabolism; phospholipid metabolism.</text>
</comment>
<comment type="subunit">
    <text evidence="1">Probably interacts with PlsX.</text>
</comment>
<comment type="subcellular location">
    <subcellularLocation>
        <location evidence="1">Cell inner membrane</location>
        <topology evidence="1">Multi-pass membrane protein</topology>
    </subcellularLocation>
</comment>
<comment type="similarity">
    <text evidence="1">Belongs to the PlsY family.</text>
</comment>
<feature type="chain" id="PRO_0000188418" description="Glycerol-3-phosphate acyltransferase">
    <location>
        <begin position="1"/>
        <end position="201"/>
    </location>
</feature>
<feature type="transmembrane region" description="Helical" evidence="1">
    <location>
        <begin position="3"/>
        <end position="23"/>
    </location>
</feature>
<feature type="transmembrane region" description="Helical" evidence="1">
    <location>
        <begin position="53"/>
        <end position="73"/>
    </location>
</feature>
<feature type="transmembrane region" description="Helical" evidence="1">
    <location>
        <begin position="80"/>
        <end position="100"/>
    </location>
</feature>
<feature type="transmembrane region" description="Helical" evidence="1">
    <location>
        <begin position="115"/>
        <end position="135"/>
    </location>
</feature>
<feature type="transmembrane region" description="Helical" evidence="1">
    <location>
        <begin position="153"/>
        <end position="175"/>
    </location>
</feature>
<proteinExistence type="inferred from homology"/>